<accession>B5EFP4</accession>
<name>RPOC_CITBB</name>
<feature type="chain" id="PRO_1000141770" description="DNA-directed RNA polymerase subunit beta'">
    <location>
        <begin position="1"/>
        <end position="1382"/>
    </location>
</feature>
<feature type="binding site" evidence="1">
    <location>
        <position position="70"/>
    </location>
    <ligand>
        <name>Zn(2+)</name>
        <dbReference type="ChEBI" id="CHEBI:29105"/>
        <label>1</label>
    </ligand>
</feature>
<feature type="binding site" evidence="1">
    <location>
        <position position="72"/>
    </location>
    <ligand>
        <name>Zn(2+)</name>
        <dbReference type="ChEBI" id="CHEBI:29105"/>
        <label>1</label>
    </ligand>
</feature>
<feature type="binding site" evidence="1">
    <location>
        <position position="85"/>
    </location>
    <ligand>
        <name>Zn(2+)</name>
        <dbReference type="ChEBI" id="CHEBI:29105"/>
        <label>1</label>
    </ligand>
</feature>
<feature type="binding site" evidence="1">
    <location>
        <position position="88"/>
    </location>
    <ligand>
        <name>Zn(2+)</name>
        <dbReference type="ChEBI" id="CHEBI:29105"/>
        <label>1</label>
    </ligand>
</feature>
<feature type="binding site" evidence="1">
    <location>
        <position position="460"/>
    </location>
    <ligand>
        <name>Mg(2+)</name>
        <dbReference type="ChEBI" id="CHEBI:18420"/>
    </ligand>
</feature>
<feature type="binding site" evidence="1">
    <location>
        <position position="462"/>
    </location>
    <ligand>
        <name>Mg(2+)</name>
        <dbReference type="ChEBI" id="CHEBI:18420"/>
    </ligand>
</feature>
<feature type="binding site" evidence="1">
    <location>
        <position position="464"/>
    </location>
    <ligand>
        <name>Mg(2+)</name>
        <dbReference type="ChEBI" id="CHEBI:18420"/>
    </ligand>
</feature>
<feature type="binding site" evidence="1">
    <location>
        <position position="808"/>
    </location>
    <ligand>
        <name>Zn(2+)</name>
        <dbReference type="ChEBI" id="CHEBI:29105"/>
        <label>2</label>
    </ligand>
</feature>
<feature type="binding site" evidence="1">
    <location>
        <position position="882"/>
    </location>
    <ligand>
        <name>Zn(2+)</name>
        <dbReference type="ChEBI" id="CHEBI:29105"/>
        <label>2</label>
    </ligand>
</feature>
<feature type="binding site" evidence="1">
    <location>
        <position position="889"/>
    </location>
    <ligand>
        <name>Zn(2+)</name>
        <dbReference type="ChEBI" id="CHEBI:29105"/>
        <label>2</label>
    </ligand>
</feature>
<feature type="binding site" evidence="1">
    <location>
        <position position="892"/>
    </location>
    <ligand>
        <name>Zn(2+)</name>
        <dbReference type="ChEBI" id="CHEBI:29105"/>
        <label>2</label>
    </ligand>
</feature>
<protein>
    <recommendedName>
        <fullName evidence="1">DNA-directed RNA polymerase subunit beta'</fullName>
        <shortName evidence="1">RNAP subunit beta'</shortName>
        <ecNumber evidence="1">2.7.7.6</ecNumber>
    </recommendedName>
    <alternativeName>
        <fullName evidence="1">RNA polymerase subunit beta'</fullName>
    </alternativeName>
    <alternativeName>
        <fullName evidence="1">Transcriptase subunit beta'</fullName>
    </alternativeName>
</protein>
<evidence type="ECO:0000255" key="1">
    <source>
        <dbReference type="HAMAP-Rule" id="MF_01322"/>
    </source>
</evidence>
<reference key="1">
    <citation type="submission" date="2008-07" db="EMBL/GenBank/DDBJ databases">
        <title>Complete sequence of Geobacter bemidjiensis BEM.</title>
        <authorList>
            <consortium name="US DOE Joint Genome Institute"/>
            <person name="Lucas S."/>
            <person name="Copeland A."/>
            <person name="Lapidus A."/>
            <person name="Glavina del Rio T."/>
            <person name="Dalin E."/>
            <person name="Tice H."/>
            <person name="Bruce D."/>
            <person name="Goodwin L."/>
            <person name="Pitluck S."/>
            <person name="Kiss H."/>
            <person name="Brettin T."/>
            <person name="Detter J.C."/>
            <person name="Han C."/>
            <person name="Kuske C.R."/>
            <person name="Schmutz J."/>
            <person name="Larimer F."/>
            <person name="Land M."/>
            <person name="Hauser L."/>
            <person name="Kyrpides N."/>
            <person name="Lykidis A."/>
            <person name="Lovley D."/>
            <person name="Richardson P."/>
        </authorList>
    </citation>
    <scope>NUCLEOTIDE SEQUENCE [LARGE SCALE GENOMIC DNA]</scope>
    <source>
        <strain>ATCC BAA-1014 / DSM 16622 / JCM 12645 / Bem</strain>
    </source>
</reference>
<proteinExistence type="inferred from homology"/>
<dbReference type="EC" id="2.7.7.6" evidence="1"/>
<dbReference type="EMBL" id="CP001124">
    <property type="protein sequence ID" value="ACH37948.1"/>
    <property type="molecule type" value="Genomic_DNA"/>
</dbReference>
<dbReference type="RefSeq" id="WP_012529360.1">
    <property type="nucleotide sequence ID" value="NC_011146.1"/>
</dbReference>
<dbReference type="SMR" id="B5EFP4"/>
<dbReference type="STRING" id="404380.Gbem_0927"/>
<dbReference type="KEGG" id="gbm:Gbem_0927"/>
<dbReference type="eggNOG" id="COG0086">
    <property type="taxonomic scope" value="Bacteria"/>
</dbReference>
<dbReference type="HOGENOM" id="CLU_000524_3_1_7"/>
<dbReference type="OrthoDB" id="9815296at2"/>
<dbReference type="Proteomes" id="UP000008825">
    <property type="component" value="Chromosome"/>
</dbReference>
<dbReference type="GO" id="GO:0000428">
    <property type="term" value="C:DNA-directed RNA polymerase complex"/>
    <property type="evidence" value="ECO:0007669"/>
    <property type="project" value="UniProtKB-KW"/>
</dbReference>
<dbReference type="GO" id="GO:0003677">
    <property type="term" value="F:DNA binding"/>
    <property type="evidence" value="ECO:0007669"/>
    <property type="project" value="UniProtKB-UniRule"/>
</dbReference>
<dbReference type="GO" id="GO:0003899">
    <property type="term" value="F:DNA-directed RNA polymerase activity"/>
    <property type="evidence" value="ECO:0007669"/>
    <property type="project" value="UniProtKB-UniRule"/>
</dbReference>
<dbReference type="GO" id="GO:0000287">
    <property type="term" value="F:magnesium ion binding"/>
    <property type="evidence" value="ECO:0007669"/>
    <property type="project" value="UniProtKB-UniRule"/>
</dbReference>
<dbReference type="GO" id="GO:0008270">
    <property type="term" value="F:zinc ion binding"/>
    <property type="evidence" value="ECO:0007669"/>
    <property type="project" value="UniProtKB-UniRule"/>
</dbReference>
<dbReference type="GO" id="GO:0006351">
    <property type="term" value="P:DNA-templated transcription"/>
    <property type="evidence" value="ECO:0007669"/>
    <property type="project" value="UniProtKB-UniRule"/>
</dbReference>
<dbReference type="CDD" id="cd02655">
    <property type="entry name" value="RNAP_beta'_C"/>
    <property type="match status" value="1"/>
</dbReference>
<dbReference type="CDD" id="cd01609">
    <property type="entry name" value="RNAP_beta'_N"/>
    <property type="match status" value="1"/>
</dbReference>
<dbReference type="FunFam" id="1.10.132.30:FF:000003">
    <property type="entry name" value="DNA-directed RNA polymerase subunit beta"/>
    <property type="match status" value="1"/>
</dbReference>
<dbReference type="FunFam" id="1.10.150.390:FF:000002">
    <property type="entry name" value="DNA-directed RNA polymerase subunit beta"/>
    <property type="match status" value="1"/>
</dbReference>
<dbReference type="FunFam" id="1.10.40.90:FF:000001">
    <property type="entry name" value="DNA-directed RNA polymerase subunit beta"/>
    <property type="match status" value="1"/>
</dbReference>
<dbReference type="Gene3D" id="1.10.132.30">
    <property type="match status" value="1"/>
</dbReference>
<dbReference type="Gene3D" id="1.10.150.390">
    <property type="match status" value="1"/>
</dbReference>
<dbReference type="Gene3D" id="1.10.1790.20">
    <property type="match status" value="1"/>
</dbReference>
<dbReference type="Gene3D" id="1.10.40.90">
    <property type="match status" value="1"/>
</dbReference>
<dbReference type="Gene3D" id="2.40.40.20">
    <property type="match status" value="1"/>
</dbReference>
<dbReference type="Gene3D" id="2.40.50.100">
    <property type="match status" value="3"/>
</dbReference>
<dbReference type="Gene3D" id="4.10.860.120">
    <property type="entry name" value="RNA polymerase II, clamp domain"/>
    <property type="match status" value="1"/>
</dbReference>
<dbReference type="Gene3D" id="1.10.274.100">
    <property type="entry name" value="RNA polymerase Rpb1, domain 3"/>
    <property type="match status" value="2"/>
</dbReference>
<dbReference type="HAMAP" id="MF_01322">
    <property type="entry name" value="RNApol_bact_RpoC"/>
    <property type="match status" value="1"/>
</dbReference>
<dbReference type="InterPro" id="IPR045867">
    <property type="entry name" value="DNA-dir_RpoC_beta_prime"/>
</dbReference>
<dbReference type="InterPro" id="IPR012754">
    <property type="entry name" value="DNA-dir_RpoC_beta_prime_bact"/>
</dbReference>
<dbReference type="InterPro" id="IPR000722">
    <property type="entry name" value="RNA_pol_asu"/>
</dbReference>
<dbReference type="InterPro" id="IPR006592">
    <property type="entry name" value="RNA_pol_N"/>
</dbReference>
<dbReference type="InterPro" id="IPR007080">
    <property type="entry name" value="RNA_pol_Rpb1_1"/>
</dbReference>
<dbReference type="InterPro" id="IPR007066">
    <property type="entry name" value="RNA_pol_Rpb1_3"/>
</dbReference>
<dbReference type="InterPro" id="IPR042102">
    <property type="entry name" value="RNA_pol_Rpb1_3_sf"/>
</dbReference>
<dbReference type="InterPro" id="IPR007083">
    <property type="entry name" value="RNA_pol_Rpb1_4"/>
</dbReference>
<dbReference type="InterPro" id="IPR007081">
    <property type="entry name" value="RNA_pol_Rpb1_5"/>
</dbReference>
<dbReference type="InterPro" id="IPR044893">
    <property type="entry name" value="RNA_pol_Rpb1_clamp_domain"/>
</dbReference>
<dbReference type="InterPro" id="IPR038120">
    <property type="entry name" value="Rpb1_funnel_sf"/>
</dbReference>
<dbReference type="NCBIfam" id="TIGR02386">
    <property type="entry name" value="rpoC_TIGR"/>
    <property type="match status" value="1"/>
</dbReference>
<dbReference type="PANTHER" id="PTHR19376">
    <property type="entry name" value="DNA-DIRECTED RNA POLYMERASE"/>
    <property type="match status" value="1"/>
</dbReference>
<dbReference type="PANTHER" id="PTHR19376:SF54">
    <property type="entry name" value="DNA-DIRECTED RNA POLYMERASE SUBUNIT BETA"/>
    <property type="match status" value="1"/>
</dbReference>
<dbReference type="Pfam" id="PF04997">
    <property type="entry name" value="RNA_pol_Rpb1_1"/>
    <property type="match status" value="1"/>
</dbReference>
<dbReference type="Pfam" id="PF00623">
    <property type="entry name" value="RNA_pol_Rpb1_2"/>
    <property type="match status" value="1"/>
</dbReference>
<dbReference type="Pfam" id="PF04983">
    <property type="entry name" value="RNA_pol_Rpb1_3"/>
    <property type="match status" value="1"/>
</dbReference>
<dbReference type="Pfam" id="PF05000">
    <property type="entry name" value="RNA_pol_Rpb1_4"/>
    <property type="match status" value="1"/>
</dbReference>
<dbReference type="Pfam" id="PF04998">
    <property type="entry name" value="RNA_pol_Rpb1_5"/>
    <property type="match status" value="1"/>
</dbReference>
<dbReference type="SMART" id="SM00663">
    <property type="entry name" value="RPOLA_N"/>
    <property type="match status" value="1"/>
</dbReference>
<dbReference type="SUPFAM" id="SSF64484">
    <property type="entry name" value="beta and beta-prime subunits of DNA dependent RNA-polymerase"/>
    <property type="match status" value="1"/>
</dbReference>
<keyword id="KW-0240">DNA-directed RNA polymerase</keyword>
<keyword id="KW-0460">Magnesium</keyword>
<keyword id="KW-0479">Metal-binding</keyword>
<keyword id="KW-0548">Nucleotidyltransferase</keyword>
<keyword id="KW-1185">Reference proteome</keyword>
<keyword id="KW-0804">Transcription</keyword>
<keyword id="KW-0808">Transferase</keyword>
<keyword id="KW-0862">Zinc</keyword>
<organism>
    <name type="scientific">Citrifermentans bemidjiense (strain ATCC BAA-1014 / DSM 16622 / JCM 12645 / Bem)</name>
    <name type="common">Geobacter bemidjiensis</name>
    <dbReference type="NCBI Taxonomy" id="404380"/>
    <lineage>
        <taxon>Bacteria</taxon>
        <taxon>Pseudomonadati</taxon>
        <taxon>Thermodesulfobacteriota</taxon>
        <taxon>Desulfuromonadia</taxon>
        <taxon>Geobacterales</taxon>
        <taxon>Geobacteraceae</taxon>
        <taxon>Citrifermentans</taxon>
    </lineage>
</organism>
<gene>
    <name evidence="1" type="primary">rpoC</name>
    <name type="ordered locus">Gbem_0927</name>
</gene>
<sequence>MEDIFNFFDKPKDPLHFSSIKISISSPDKIRERSFGEVKKPETINYRTFKPERDGLFCAKIFGPTKDYECNCGKYKRMKHRGIVCEKCGVEVIPSKVRRERLGHIDLATPVAHIWFLKSLPSRIGNLMDITLKDLEKVLYFEAYVVTDPKDTGLAFGTVFSEDQYQKALEEYSYGFEAGMGAAAIRTCLTSMDLDQLSEQLRIEMQEATSEAKRKKTAKRLKVIEAFKNSGNKPEWMILECIPVLPPELRPLVPLDGGRFATSDLNDLYRRVINRNNRLKRLMELQAPEVIIRNEKRMLQEAVDALFDNGRRGRAIAGPNKRPLKSLSDMLKGKSGRFRQNLLGKRVDYSGRSVIVVGPELRLHQCGLPKKMALELFKPFIYNKLEERGFVTTIKSAKKMVEKEKPEVWDVLEEVIKEHPVLLNRAPTLHRLGIQAFEPVLIEGKAIQLHPLVCTAFNADFDGDQMAVHLPLSVESQVEARVLMMSTNNILSPAHGKPIIVPSQDMVLGIYYMTRDKHFALGEGKIFASPDEVNIAWDAGEIHLQARIKVRMKNLVSDEKPTLIETTTGRVLLRDILPDAVPYATINKVMTKKELSNLVDVCYRLAGNKETVILADKLKAIGFRYAAKAGISISINDMVIPEGKPAIINRATEEVQEIQNQYTEGLITDGERYNKVIDIWAKSTEDIAKEMLDNLSRDTILDPEGKEVKVPSFNAIHMMADSGARGSAQQIRQLAGMRGLMAKPSGEIIETPITANFREGLTVLQYFISTHGARKGLADTALKTANSGYLTRRLVDVAQDAIITEADCGTIDGLTVSSLTEGGEVIEHIGDRILGRVALDDILDPVTGDVLVPANEEIDETLVAKIEAAGLEKVKIRSVLTCESRRGICAKCYGRDLARGHLVNRGEAVGVIAAQSIGEPGTQLTMRTFHIGGTASRRAEQTALEARNEGFAKFININYVTNSEGHHIVMNRNGELAIVDETGREREKYGVVYGAKIKVSPQEKVAQGQSVAEWDPYTMPILTEVAGRVKFGDVIEGVTMEEQVDEVTGLSRKVIIETRDTDKRPRITIKDESGKTAKIGENLLARYYLPVGSNINVLEEIEVNAGDVIAKIPRETTKTKDITGGLPRVAELFEARKPKDFAVITEIDGVVAFGKDAKGKRKVLVTPELGEPKEYLIPKGKHISVHEGDHVRAGEALMDGSSNPHDILRVLGQKELAKYLVDEVQEVYRLQGVKINDKHIETIVRQMLRRVRVKDVGDTNLLIDDQIERWVFEEENEKAMDKGGRPATAESLLLGITKASLSTESFISAASFQETTKVLTQASIEGKVDSLRGLKENVIMGRLIPAGTGLALYRNLRMVAEEPVIIPEPAEPEDEEIYEEEA</sequence>
<comment type="function">
    <text evidence="1">DNA-dependent RNA polymerase catalyzes the transcription of DNA into RNA using the four ribonucleoside triphosphates as substrates.</text>
</comment>
<comment type="catalytic activity">
    <reaction evidence="1">
        <text>RNA(n) + a ribonucleoside 5'-triphosphate = RNA(n+1) + diphosphate</text>
        <dbReference type="Rhea" id="RHEA:21248"/>
        <dbReference type="Rhea" id="RHEA-COMP:14527"/>
        <dbReference type="Rhea" id="RHEA-COMP:17342"/>
        <dbReference type="ChEBI" id="CHEBI:33019"/>
        <dbReference type="ChEBI" id="CHEBI:61557"/>
        <dbReference type="ChEBI" id="CHEBI:140395"/>
        <dbReference type="EC" id="2.7.7.6"/>
    </reaction>
</comment>
<comment type="cofactor">
    <cofactor evidence="1">
        <name>Mg(2+)</name>
        <dbReference type="ChEBI" id="CHEBI:18420"/>
    </cofactor>
    <text evidence="1">Binds 1 Mg(2+) ion per subunit.</text>
</comment>
<comment type="cofactor">
    <cofactor evidence="1">
        <name>Zn(2+)</name>
        <dbReference type="ChEBI" id="CHEBI:29105"/>
    </cofactor>
    <text evidence="1">Binds 2 Zn(2+) ions per subunit.</text>
</comment>
<comment type="subunit">
    <text evidence="1">The RNAP catalytic core consists of 2 alpha, 1 beta, 1 beta' and 1 omega subunit. When a sigma factor is associated with the core the holoenzyme is formed, which can initiate transcription.</text>
</comment>
<comment type="similarity">
    <text evidence="1">Belongs to the RNA polymerase beta' chain family.</text>
</comment>